<name>CHDC_BACCN</name>
<evidence type="ECO:0000255" key="1">
    <source>
        <dbReference type="HAMAP-Rule" id="MF_01442"/>
    </source>
</evidence>
<feature type="chain" id="PRO_1000087456" description="Coproheme decarboxylase">
    <location>
        <begin position="1"/>
        <end position="247"/>
    </location>
</feature>
<feature type="active site" evidence="1">
    <location>
        <position position="143"/>
    </location>
</feature>
<feature type="binding site" evidence="1">
    <location>
        <position position="129"/>
    </location>
    <ligand>
        <name>Fe-coproporphyrin III</name>
        <dbReference type="ChEBI" id="CHEBI:68438"/>
    </ligand>
</feature>
<feature type="binding site" evidence="1">
    <location>
        <begin position="143"/>
        <end position="147"/>
    </location>
    <ligand>
        <name>Fe-coproporphyrin III</name>
        <dbReference type="ChEBI" id="CHEBI:68438"/>
    </ligand>
</feature>
<feature type="binding site" description="axial binding residue" evidence="1">
    <location>
        <position position="170"/>
    </location>
    <ligand>
        <name>Fe-coproporphyrin III</name>
        <dbReference type="ChEBI" id="CHEBI:68438"/>
    </ligand>
    <ligandPart>
        <name>Fe</name>
        <dbReference type="ChEBI" id="CHEBI:18248"/>
    </ligandPart>
</feature>
<feature type="binding site" evidence="1">
    <location>
        <position position="183"/>
    </location>
    <ligand>
        <name>Fe-coproporphyrin III</name>
        <dbReference type="ChEBI" id="CHEBI:68438"/>
    </ligand>
</feature>
<feature type="binding site" evidence="1">
    <location>
        <position position="221"/>
    </location>
    <ligand>
        <name>Fe-coproporphyrin III</name>
        <dbReference type="ChEBI" id="CHEBI:68438"/>
    </ligand>
</feature>
<gene>
    <name evidence="1" type="primary">chdC</name>
    <name type="ordered locus">Bcer98_3909</name>
</gene>
<dbReference type="EC" id="1.3.98.5" evidence="1"/>
<dbReference type="EMBL" id="CP000764">
    <property type="protein sequence ID" value="ABS24093.1"/>
    <property type="molecule type" value="Genomic_DNA"/>
</dbReference>
<dbReference type="SMR" id="A7GVD5"/>
<dbReference type="STRING" id="315749.Bcer98_3909"/>
<dbReference type="GeneID" id="33899141"/>
<dbReference type="KEGG" id="bcy:Bcer98_3909"/>
<dbReference type="eggNOG" id="COG3253">
    <property type="taxonomic scope" value="Bacteria"/>
</dbReference>
<dbReference type="HOGENOM" id="CLU_063226_1_0_9"/>
<dbReference type="OrthoDB" id="9773646at2"/>
<dbReference type="UniPathway" id="UPA00252"/>
<dbReference type="Proteomes" id="UP000002300">
    <property type="component" value="Chromosome"/>
</dbReference>
<dbReference type="GO" id="GO:0020037">
    <property type="term" value="F:heme binding"/>
    <property type="evidence" value="ECO:0007669"/>
    <property type="project" value="InterPro"/>
</dbReference>
<dbReference type="GO" id="GO:0046872">
    <property type="term" value="F:metal ion binding"/>
    <property type="evidence" value="ECO:0007669"/>
    <property type="project" value="UniProtKB-KW"/>
</dbReference>
<dbReference type="GO" id="GO:0016634">
    <property type="term" value="F:oxidoreductase activity, acting on the CH-CH group of donors, oxygen as acceptor"/>
    <property type="evidence" value="ECO:0007669"/>
    <property type="project" value="UniProtKB-UniRule"/>
</dbReference>
<dbReference type="GO" id="GO:0004601">
    <property type="term" value="F:peroxidase activity"/>
    <property type="evidence" value="ECO:0007669"/>
    <property type="project" value="InterPro"/>
</dbReference>
<dbReference type="GO" id="GO:0006785">
    <property type="term" value="P:heme B biosynthetic process"/>
    <property type="evidence" value="ECO:0007669"/>
    <property type="project" value="UniProtKB-UniRule"/>
</dbReference>
<dbReference type="Gene3D" id="3.30.70.1030">
    <property type="entry name" value="Apc35880, domain 1"/>
    <property type="match status" value="2"/>
</dbReference>
<dbReference type="HAMAP" id="MF_01442">
    <property type="entry name" value="Coproheme_decarbox_1"/>
    <property type="match status" value="1"/>
</dbReference>
<dbReference type="InterPro" id="IPR031332">
    <property type="entry name" value="CHDC"/>
</dbReference>
<dbReference type="InterPro" id="IPR010644">
    <property type="entry name" value="ChdC/CLD"/>
</dbReference>
<dbReference type="InterPro" id="IPR011008">
    <property type="entry name" value="Dimeric_a/b-barrel"/>
</dbReference>
<dbReference type="NCBIfam" id="NF008913">
    <property type="entry name" value="PRK12276.1"/>
    <property type="match status" value="1"/>
</dbReference>
<dbReference type="PANTHER" id="PTHR36843:SF1">
    <property type="entry name" value="COPROHEME DECARBOXYLASE"/>
    <property type="match status" value="1"/>
</dbReference>
<dbReference type="PANTHER" id="PTHR36843">
    <property type="entry name" value="HEME-DEPENDENT PEROXIDASE YWFI-RELATED"/>
    <property type="match status" value="1"/>
</dbReference>
<dbReference type="Pfam" id="PF06778">
    <property type="entry name" value="Chlor_dismutase"/>
    <property type="match status" value="1"/>
</dbReference>
<dbReference type="SUPFAM" id="SSF54909">
    <property type="entry name" value="Dimeric alpha+beta barrel"/>
    <property type="match status" value="1"/>
</dbReference>
<proteinExistence type="inferred from homology"/>
<keyword id="KW-0349">Heme</keyword>
<keyword id="KW-0350">Heme biosynthesis</keyword>
<keyword id="KW-0408">Iron</keyword>
<keyword id="KW-0479">Metal-binding</keyword>
<keyword id="KW-0560">Oxidoreductase</keyword>
<comment type="function">
    <text evidence="1">Involved in coproporphyrin-dependent heme b biosynthesis. Catalyzes the decarboxylation of Fe-coproporphyrin III (coproheme) to heme b (protoheme IX), the last step of the pathway. The reaction occurs in a stepwise manner with a three-propionate intermediate.</text>
</comment>
<comment type="catalytic activity">
    <reaction evidence="1">
        <text>Fe-coproporphyrin III + 2 H2O2 + 2 H(+) = heme b + 2 CO2 + 4 H2O</text>
        <dbReference type="Rhea" id="RHEA:56516"/>
        <dbReference type="ChEBI" id="CHEBI:15377"/>
        <dbReference type="ChEBI" id="CHEBI:15378"/>
        <dbReference type="ChEBI" id="CHEBI:16240"/>
        <dbReference type="ChEBI" id="CHEBI:16526"/>
        <dbReference type="ChEBI" id="CHEBI:60344"/>
        <dbReference type="ChEBI" id="CHEBI:68438"/>
        <dbReference type="EC" id="1.3.98.5"/>
    </reaction>
    <physiologicalReaction direction="left-to-right" evidence="1">
        <dbReference type="Rhea" id="RHEA:56517"/>
    </physiologicalReaction>
</comment>
<comment type="catalytic activity">
    <reaction evidence="1">
        <text>Fe-coproporphyrin III + H2O2 + H(+) = harderoheme III + CO2 + 2 H2O</text>
        <dbReference type="Rhea" id="RHEA:57940"/>
        <dbReference type="ChEBI" id="CHEBI:15377"/>
        <dbReference type="ChEBI" id="CHEBI:15378"/>
        <dbReference type="ChEBI" id="CHEBI:16240"/>
        <dbReference type="ChEBI" id="CHEBI:16526"/>
        <dbReference type="ChEBI" id="CHEBI:68438"/>
        <dbReference type="ChEBI" id="CHEBI:142463"/>
    </reaction>
    <physiologicalReaction direction="left-to-right" evidence="1">
        <dbReference type="Rhea" id="RHEA:57941"/>
    </physiologicalReaction>
</comment>
<comment type="catalytic activity">
    <reaction evidence="1">
        <text>harderoheme III + H2O2 + H(+) = heme b + CO2 + 2 H2O</text>
        <dbReference type="Rhea" id="RHEA:57944"/>
        <dbReference type="ChEBI" id="CHEBI:15377"/>
        <dbReference type="ChEBI" id="CHEBI:15378"/>
        <dbReference type="ChEBI" id="CHEBI:16240"/>
        <dbReference type="ChEBI" id="CHEBI:16526"/>
        <dbReference type="ChEBI" id="CHEBI:60344"/>
        <dbReference type="ChEBI" id="CHEBI:142463"/>
    </reaction>
    <physiologicalReaction direction="left-to-right" evidence="1">
        <dbReference type="Rhea" id="RHEA:57945"/>
    </physiologicalReaction>
</comment>
<comment type="cofactor">
    <cofactor evidence="1">
        <name>Fe-coproporphyrin III</name>
        <dbReference type="ChEBI" id="CHEBI:68438"/>
    </cofactor>
    <text evidence="1">Fe-coproporphyrin III acts both as a substrate and a redox cofactor.</text>
</comment>
<comment type="pathway">
    <text evidence="1">Porphyrin-containing compound metabolism; protoheme biosynthesis.</text>
</comment>
<comment type="similarity">
    <text evidence="1">Belongs to the ChdC family. Type 1 subfamily.</text>
</comment>
<organism>
    <name type="scientific">Bacillus cytotoxicus (strain DSM 22905 / CIP 110041 / 391-98 / NVH 391-98)</name>
    <dbReference type="NCBI Taxonomy" id="315749"/>
    <lineage>
        <taxon>Bacteria</taxon>
        <taxon>Bacillati</taxon>
        <taxon>Bacillota</taxon>
        <taxon>Bacilli</taxon>
        <taxon>Bacillales</taxon>
        <taxon>Bacillaceae</taxon>
        <taxon>Bacillus</taxon>
        <taxon>Bacillus cereus group</taxon>
    </lineage>
</organism>
<reference key="1">
    <citation type="journal article" date="2008" name="Chem. Biol. Interact.">
        <title>Extending the Bacillus cereus group genomics to putative food-borne pathogens of different toxicity.</title>
        <authorList>
            <person name="Lapidus A."/>
            <person name="Goltsman E."/>
            <person name="Auger S."/>
            <person name="Galleron N."/>
            <person name="Segurens B."/>
            <person name="Dossat C."/>
            <person name="Land M.L."/>
            <person name="Broussolle V."/>
            <person name="Brillard J."/>
            <person name="Guinebretiere M.-H."/>
            <person name="Sanchis V."/>
            <person name="Nguen-the C."/>
            <person name="Lereclus D."/>
            <person name="Richardson P."/>
            <person name="Wincker P."/>
            <person name="Weissenbach J."/>
            <person name="Ehrlich S.D."/>
            <person name="Sorokin A."/>
        </authorList>
    </citation>
    <scope>NUCLEOTIDE SEQUENCE [LARGE SCALE GENOMIC DNA]</scope>
    <source>
        <strain>DSM 22905 / CIP 110041 / 391-98 / NVH 391-98</strain>
    </source>
</reference>
<accession>A7GVD5</accession>
<protein>
    <recommendedName>
        <fullName evidence="1">Coproheme decarboxylase</fullName>
        <ecNumber evidence="1">1.3.98.5</ecNumber>
    </recommendedName>
    <alternativeName>
        <fullName evidence="1">Coproheme III oxidative decarboxylase</fullName>
    </alternativeName>
    <alternativeName>
        <fullName evidence="1">Hydrogen peroxide-dependent heme synthase</fullName>
    </alternativeName>
</protein>
<sequence length="247" mass="28795">MSEAAKTLDGWYCLHDLRSIDWVSWKTLSSEEREQAIVEFLNIIEKWNKVAAEKQGSHAMYTIVGQKADIMFMLLRPTMEELNEIETELNKTTLAEYMIPAYSYVSVVELSNYLPADEDPYQNPQILARLYPELPTANHICFYPMDKRRQGNDNWYMLPMEERKKLMYSHGKIGRQYAGKVRQVITGSVGFDDYEWGVTLFADDVLQFKKLVYEMRFDEVSARYGEFGTFFVGNILPSEKVTSFLHV</sequence>